<dbReference type="EMBL" id="BX284606">
    <property type="protein sequence ID" value="CCD63271.1"/>
    <property type="molecule type" value="Genomic_DNA"/>
</dbReference>
<dbReference type="EMBL" id="BX284606">
    <property type="protein sequence ID" value="CCD63272.1"/>
    <property type="molecule type" value="Genomic_DNA"/>
</dbReference>
<dbReference type="EMBL" id="BX284606">
    <property type="protein sequence ID" value="CCD63273.1"/>
    <property type="molecule type" value="Genomic_DNA"/>
</dbReference>
<dbReference type="RefSeq" id="NP_001024363.2">
    <molecule id="H2KYH4-3"/>
    <property type="nucleotide sequence ID" value="NM_001029192.7"/>
</dbReference>
<dbReference type="RefSeq" id="NP_001024364.2">
    <molecule id="H2KYH4-1"/>
    <property type="nucleotide sequence ID" value="NM_001029193.7"/>
</dbReference>
<dbReference type="RefSeq" id="NP_001294827.1">
    <molecule id="H2KYH4-2"/>
    <property type="nucleotide sequence ID" value="NM_001307898.3"/>
</dbReference>
<dbReference type="FunCoup" id="H2KYH4">
    <property type="interactions" value="166"/>
</dbReference>
<dbReference type="IntAct" id="H2KYH4">
    <property type="interactions" value="51"/>
</dbReference>
<dbReference type="STRING" id="6239.C07A12.1b.1"/>
<dbReference type="PaxDb" id="6239-C07A12.1b"/>
<dbReference type="EnsemblMetazoa" id="C07A12.1a.1">
    <molecule id="H2KYH4-3"/>
    <property type="protein sequence ID" value="C07A12.1a.1"/>
    <property type="gene ID" value="WBGene00001821"/>
</dbReference>
<dbReference type="EnsemblMetazoa" id="C07A12.1b.1">
    <molecule id="H2KYH4-1"/>
    <property type="protein sequence ID" value="C07A12.1b.1"/>
    <property type="gene ID" value="WBGene00001821"/>
</dbReference>
<dbReference type="EnsemblMetazoa" id="C07A12.1c.1">
    <molecule id="H2KYH4-2"/>
    <property type="protein sequence ID" value="C07A12.1c.1"/>
    <property type="gene ID" value="WBGene00001821"/>
</dbReference>
<dbReference type="GeneID" id="180727"/>
<dbReference type="KEGG" id="cel:CELE_C07A12.1"/>
<dbReference type="UCSC" id="C07A12.1b">
    <property type="organism name" value="c. elegans"/>
</dbReference>
<dbReference type="AGR" id="WB:WBGene00001821"/>
<dbReference type="CTD" id="180727"/>
<dbReference type="WormBase" id="C07A12.1a">
    <molecule id="H2KYH4-3"/>
    <property type="protein sequence ID" value="CE39669"/>
    <property type="gene ID" value="WBGene00001821"/>
    <property type="gene designation" value="ham-2"/>
</dbReference>
<dbReference type="WormBase" id="C07A12.1b">
    <molecule id="H2KYH4-1"/>
    <property type="protein sequence ID" value="CE07992"/>
    <property type="gene ID" value="WBGene00001821"/>
    <property type="gene designation" value="ham-2"/>
</dbReference>
<dbReference type="WormBase" id="C07A12.1c">
    <molecule id="H2KYH4-2"/>
    <property type="protein sequence ID" value="CE39670"/>
    <property type="gene ID" value="WBGene00001821"/>
    <property type="gene designation" value="ham-2"/>
</dbReference>
<dbReference type="eggNOG" id="KOG1721">
    <property type="taxonomic scope" value="Eukaryota"/>
</dbReference>
<dbReference type="GeneTree" id="ENSGT00970000196410"/>
<dbReference type="HOGENOM" id="CLU_704449_0_0_1"/>
<dbReference type="InParanoid" id="H2KYH4"/>
<dbReference type="OMA" id="HNITRMF"/>
<dbReference type="OrthoDB" id="6359816at2759"/>
<dbReference type="PhylomeDB" id="H2KYH4"/>
<dbReference type="SignaLink" id="H2KYH4"/>
<dbReference type="PRO" id="PR:H2KYH4"/>
<dbReference type="Proteomes" id="UP000001940">
    <property type="component" value="Chromosome X"/>
</dbReference>
<dbReference type="Bgee" id="WBGene00001821">
    <property type="expression patterns" value="Expressed in anatomical system and 4 other cell types or tissues"/>
</dbReference>
<dbReference type="ExpressionAtlas" id="H2KYH4">
    <property type="expression patterns" value="baseline and differential"/>
</dbReference>
<dbReference type="GO" id="GO:0005634">
    <property type="term" value="C:nucleus"/>
    <property type="evidence" value="ECO:0000314"/>
    <property type="project" value="WormBase"/>
</dbReference>
<dbReference type="GO" id="GO:0003700">
    <property type="term" value="F:DNA-binding transcription factor activity"/>
    <property type="evidence" value="ECO:0000250"/>
    <property type="project" value="WormBase"/>
</dbReference>
<dbReference type="GO" id="GO:0000981">
    <property type="term" value="F:DNA-binding transcription factor activity, RNA polymerase II-specific"/>
    <property type="evidence" value="ECO:0000318"/>
    <property type="project" value="GO_Central"/>
</dbReference>
<dbReference type="GO" id="GO:0043565">
    <property type="term" value="F:sequence-specific DNA binding"/>
    <property type="evidence" value="ECO:0000318"/>
    <property type="project" value="GO_Central"/>
</dbReference>
<dbReference type="GO" id="GO:0008270">
    <property type="term" value="F:zinc ion binding"/>
    <property type="evidence" value="ECO:0007669"/>
    <property type="project" value="UniProtKB-KW"/>
</dbReference>
<dbReference type="GO" id="GO:0001709">
    <property type="term" value="P:cell fate determination"/>
    <property type="evidence" value="ECO:0000315"/>
    <property type="project" value="WormBase"/>
</dbReference>
<dbReference type="GO" id="GO:0016477">
    <property type="term" value="P:cell migration"/>
    <property type="evidence" value="ECO:0000315"/>
    <property type="project" value="WormBase"/>
</dbReference>
<dbReference type="GO" id="GO:0006355">
    <property type="term" value="P:regulation of DNA-templated transcription"/>
    <property type="evidence" value="ECO:0000250"/>
    <property type="project" value="WormBase"/>
</dbReference>
<dbReference type="GO" id="GO:0045664">
    <property type="term" value="P:regulation of neuron differentiation"/>
    <property type="evidence" value="ECO:0000315"/>
    <property type="project" value="WormBase"/>
</dbReference>
<dbReference type="GO" id="GO:0006357">
    <property type="term" value="P:regulation of transcription by RNA polymerase II"/>
    <property type="evidence" value="ECO:0000318"/>
    <property type="project" value="GO_Central"/>
</dbReference>
<dbReference type="Gene3D" id="3.30.160.60">
    <property type="entry name" value="Classic Zinc Finger"/>
    <property type="match status" value="1"/>
</dbReference>
<dbReference type="InterPro" id="IPR036236">
    <property type="entry name" value="Znf_C2H2_sf"/>
</dbReference>
<dbReference type="InterPro" id="IPR013087">
    <property type="entry name" value="Znf_C2H2_type"/>
</dbReference>
<dbReference type="PANTHER" id="PTHR24376:SF235">
    <property type="entry name" value="C2H2-TYPE DOMAIN-CONTAINING PROTEIN"/>
    <property type="match status" value="1"/>
</dbReference>
<dbReference type="PANTHER" id="PTHR24376">
    <property type="entry name" value="ZINC FINGER PROTEIN"/>
    <property type="match status" value="1"/>
</dbReference>
<dbReference type="Pfam" id="PF00096">
    <property type="entry name" value="zf-C2H2"/>
    <property type="match status" value="1"/>
</dbReference>
<dbReference type="SMART" id="SM00355">
    <property type="entry name" value="ZnF_C2H2"/>
    <property type="match status" value="3"/>
</dbReference>
<dbReference type="SUPFAM" id="SSF57667">
    <property type="entry name" value="beta-beta-alpha zinc fingers"/>
    <property type="match status" value="2"/>
</dbReference>
<dbReference type="PROSITE" id="PS00028">
    <property type="entry name" value="ZINC_FINGER_C2H2_1"/>
    <property type="match status" value="2"/>
</dbReference>
<dbReference type="PROSITE" id="PS50157">
    <property type="entry name" value="ZINC_FINGER_C2H2_2"/>
    <property type="match status" value="2"/>
</dbReference>
<gene>
    <name evidence="7" type="primary">ham-2</name>
    <name evidence="7" type="ORF">C07A12.1</name>
</gene>
<organism evidence="5">
    <name type="scientific">Caenorhabditis elegans</name>
    <dbReference type="NCBI Taxonomy" id="6239"/>
    <lineage>
        <taxon>Eukaryota</taxon>
        <taxon>Metazoa</taxon>
        <taxon>Ecdysozoa</taxon>
        <taxon>Nematoda</taxon>
        <taxon>Chromadorea</taxon>
        <taxon>Rhabditida</taxon>
        <taxon>Rhabditina</taxon>
        <taxon>Rhabditomorpha</taxon>
        <taxon>Rhabditoidea</taxon>
        <taxon>Rhabditidae</taxon>
        <taxon>Peloderinae</taxon>
        <taxon>Caenorhabditis</taxon>
    </lineage>
</organism>
<protein>
    <recommendedName>
        <fullName evidence="4">Zinc finger protein ham-2</fullName>
    </recommendedName>
    <alternativeName>
        <fullName evidence="7">HSN abnormal migration protein 2</fullName>
    </alternativeName>
</protein>
<reference evidence="5" key="1">
    <citation type="journal article" date="1998" name="Science">
        <title>Genome sequence of the nematode C. elegans: a platform for investigating biology.</title>
        <authorList>
            <consortium name="The C. elegans sequencing consortium"/>
        </authorList>
    </citation>
    <scope>NUCLEOTIDE SEQUENCE [LARGE SCALE GENOMIC DNA]</scope>
    <source>
        <strain evidence="5">Bristol N2</strain>
    </source>
</reference>
<reference evidence="4" key="2">
    <citation type="journal article" date="1999" name="Genes Dev.">
        <title>The Caenorhabditis elegans gene ham-2 links Hox patterning to migration of the HSN motor neuron.</title>
        <authorList>
            <person name="Baum P.D."/>
            <person name="Guenther C."/>
            <person name="Frank C.A."/>
            <person name="Pham B.V."/>
            <person name="Garriga G."/>
        </authorList>
    </citation>
    <scope>FUNCTION</scope>
    <scope>SUBCELLULAR LOCATION</scope>
    <scope>DEVELOPMENTAL STAGE</scope>
    <scope>MUTAGENESIS OF SER-30 AND HIS-39</scope>
</reference>
<feature type="chain" id="PRO_0000450750" description="Zinc finger protein ham-2">
    <location>
        <begin position="1"/>
        <end position="392"/>
    </location>
</feature>
<feature type="zinc finger region" description="C2H2-type 1" evidence="1">
    <location>
        <begin position="16"/>
        <end position="39"/>
    </location>
</feature>
<feature type="zinc finger region" description="C2H2-type 2" evidence="1">
    <location>
        <begin position="43"/>
        <end position="66"/>
    </location>
</feature>
<feature type="zinc finger region" description="C2H2-type 3; degenerate" evidence="1">
    <location>
        <begin position="72"/>
        <end position="95"/>
    </location>
</feature>
<feature type="region of interest" description="Disordered" evidence="2">
    <location>
        <begin position="106"/>
        <end position="130"/>
    </location>
</feature>
<feature type="region of interest" description="Disordered" evidence="2">
    <location>
        <begin position="278"/>
        <end position="303"/>
    </location>
</feature>
<feature type="compositionally biased region" description="Polar residues" evidence="2">
    <location>
        <begin position="112"/>
        <end position="123"/>
    </location>
</feature>
<feature type="compositionally biased region" description="Low complexity" evidence="2">
    <location>
        <begin position="289"/>
        <end position="303"/>
    </location>
</feature>
<feature type="splice variant" id="VSP_060687" description="In isoform c." evidence="4">
    <location>
        <begin position="1"/>
        <end position="61"/>
    </location>
</feature>
<feature type="splice variant" id="VSP_060688" description="In isoform a." evidence="4">
    <location>
        <begin position="112"/>
        <end position="113"/>
    </location>
</feature>
<feature type="mutagenesis site" description="In gm16; causes arrest at the L1 larval stage, defects in hermaphrodite-specific neuron migration, and impairs pharynx attachment to the nose." evidence="3">
    <original>S</original>
    <variation>F</variation>
    <location>
        <position position="30"/>
    </location>
</feature>
<feature type="mutagenesis site" description="In gm48; in some mutants, causes arrest at the L1 larval stage and defects in hermaphrodite-specific neuron migration." evidence="3">
    <original>H</original>
    <variation>Y</variation>
    <location>
        <position position="39"/>
    </location>
</feature>
<evidence type="ECO:0000255" key="1">
    <source>
        <dbReference type="PROSITE-ProRule" id="PRU00042"/>
    </source>
</evidence>
<evidence type="ECO:0000256" key="2">
    <source>
        <dbReference type="SAM" id="MobiDB-lite"/>
    </source>
</evidence>
<evidence type="ECO:0000269" key="3">
    <source>
    </source>
</evidence>
<evidence type="ECO:0000305" key="4"/>
<evidence type="ECO:0000312" key="5">
    <source>
        <dbReference type="Proteomes" id="UP000001940"/>
    </source>
</evidence>
<evidence type="ECO:0000312" key="6">
    <source>
        <dbReference type="WormBase" id="C07A12.1a"/>
    </source>
</evidence>
<evidence type="ECO:0000312" key="7">
    <source>
        <dbReference type="WormBase" id="C07A12.1b"/>
    </source>
</evidence>
<evidence type="ECO:0000312" key="8">
    <source>
        <dbReference type="WormBase" id="C07A12.1c"/>
    </source>
</evidence>
<name>HAM2_CAEEL</name>
<comment type="function">
    <text evidence="3">Probable transcription factor that acts downstream of egl-15, to promote migration of the HSN motor neurons from the tail to the gonad primordium during HSN cell differentiation (PubMed:10049362).</text>
</comment>
<comment type="subcellular location">
    <subcellularLocation>
        <location evidence="3">Nucleus</location>
    </subcellularLocation>
</comment>
<comment type="alternative products">
    <event type="alternative splicing"/>
    <isoform>
        <id>H2KYH4-1</id>
        <name evidence="7">b</name>
        <sequence type="displayed"/>
    </isoform>
    <isoform>
        <id>H2KYH4-2</id>
        <name evidence="8">c</name>
        <sequence type="described" ref="VSP_060687"/>
    </isoform>
    <isoform>
        <id>H2KYH4-3</id>
        <name evidence="6">a</name>
        <sequence type="described" ref="VSP_060688"/>
    </isoform>
</comment>
<comment type="developmental stage">
    <text evidence="3">During embryogenesis, expressed in HSN motor neurons (at protein level) (PubMed:10049362). Expressed in HSNs both before and during cell migration (at protein level) (PubMed:10049362).</text>
</comment>
<keyword id="KW-0025">Alternative splicing</keyword>
<keyword id="KW-0479">Metal-binding</keyword>
<keyword id="KW-0539">Nucleus</keyword>
<keyword id="KW-1185">Reference proteome</keyword>
<keyword id="KW-0677">Repeat</keyword>
<keyword id="KW-0804">Transcription</keyword>
<keyword id="KW-0862">Zinc</keyword>
<keyword id="KW-0863">Zinc-finger</keyword>
<sequence length="392" mass="43672">MPYRAELKRPDLKGSFPCSICQKVFCHSSSLSRHRMQAHFKSYTCTTCNNEIPSNDTLRSHMYRVHNITRMFMCRCCNWAFPDKTSLHIHMQSMLKNGTPGEAAVLAKSSDVVDSTSESGSPRQSPPFSPDLLMQKRMLQVAANNNNIGSIFPTLLKSPDSKSMFPLDLSNMGPSQFLSAWLANNPINTAALNLAAQQTPSKDSIQSSNISDYDDLEVQTTEEDIKFEVESSDVSPRSVIVKTEPTFKRELEHDADIDVEGDDGEPPLKMTIDDKNIHISHDQPSPTVSDSHISGGSSSHSGESLKCFDCQVARGKLVAVEDKCRAYEKTIRELQVQVDFLRKIQPNPMPPVMLPPPMMPMPSPGPNNLFQNPAMRMLLNNLIHMNRPSVVP</sequence>
<proteinExistence type="evidence at protein level"/>
<accession>H2KYH4</accession>
<accession>A3RMS1</accession>
<accession>A3RMS3</accession>